<protein>
    <recommendedName>
        <fullName evidence="2">Probable peptidoglycan glycosyltransferase FtsW</fullName>
        <shortName evidence="2">PGT</shortName>
        <ecNumber evidence="2">2.4.99.28</ecNumber>
    </recommendedName>
    <alternativeName>
        <fullName evidence="2">Cell division protein FtsW</fullName>
    </alternativeName>
    <alternativeName>
        <fullName evidence="2">Cell wall polymerase</fullName>
    </alternativeName>
    <alternativeName>
        <fullName evidence="2">Peptidoglycan polymerase</fullName>
        <shortName evidence="2">PG polymerase</shortName>
    </alternativeName>
</protein>
<proteinExistence type="inferred from homology"/>
<dbReference type="EC" id="2.4.99.28" evidence="2"/>
<dbReference type="EMBL" id="CP002872">
    <property type="protein sequence ID" value="AEI36717.1"/>
    <property type="molecule type" value="Genomic_DNA"/>
</dbReference>
<dbReference type="RefSeq" id="WP_013923546.1">
    <property type="nucleotide sequence ID" value="NC_015696.1"/>
</dbReference>
<dbReference type="SMR" id="F8GAB4"/>
<dbReference type="STRING" id="573569.F7308_1793"/>
<dbReference type="KEGG" id="frt:F7308_1793"/>
<dbReference type="eggNOG" id="COG0772">
    <property type="taxonomic scope" value="Bacteria"/>
</dbReference>
<dbReference type="HOGENOM" id="CLU_029243_1_1_6"/>
<dbReference type="OrthoDB" id="9768187at2"/>
<dbReference type="UniPathway" id="UPA00219"/>
<dbReference type="GO" id="GO:0032153">
    <property type="term" value="C:cell division site"/>
    <property type="evidence" value="ECO:0007669"/>
    <property type="project" value="UniProtKB-UniRule"/>
</dbReference>
<dbReference type="GO" id="GO:0005886">
    <property type="term" value="C:plasma membrane"/>
    <property type="evidence" value="ECO:0007669"/>
    <property type="project" value="UniProtKB-SubCell"/>
</dbReference>
<dbReference type="GO" id="GO:0015648">
    <property type="term" value="F:lipid-linked peptidoglycan transporter activity"/>
    <property type="evidence" value="ECO:0007669"/>
    <property type="project" value="TreeGrafter"/>
</dbReference>
<dbReference type="GO" id="GO:0008955">
    <property type="term" value="F:peptidoglycan glycosyltransferase activity"/>
    <property type="evidence" value="ECO:0007669"/>
    <property type="project" value="UniProtKB-UniRule"/>
</dbReference>
<dbReference type="GO" id="GO:0071555">
    <property type="term" value="P:cell wall organization"/>
    <property type="evidence" value="ECO:0007669"/>
    <property type="project" value="UniProtKB-KW"/>
</dbReference>
<dbReference type="GO" id="GO:0043093">
    <property type="term" value="P:FtsZ-dependent cytokinesis"/>
    <property type="evidence" value="ECO:0007669"/>
    <property type="project" value="UniProtKB-UniRule"/>
</dbReference>
<dbReference type="GO" id="GO:0009252">
    <property type="term" value="P:peptidoglycan biosynthetic process"/>
    <property type="evidence" value="ECO:0007669"/>
    <property type="project" value="UniProtKB-UniRule"/>
</dbReference>
<dbReference type="GO" id="GO:0008360">
    <property type="term" value="P:regulation of cell shape"/>
    <property type="evidence" value="ECO:0007669"/>
    <property type="project" value="UniProtKB-KW"/>
</dbReference>
<dbReference type="HAMAP" id="MF_00913">
    <property type="entry name" value="PGT_FtsW_proteobact"/>
    <property type="match status" value="1"/>
</dbReference>
<dbReference type="InterPro" id="IPR018365">
    <property type="entry name" value="Cell_cycle_FtsW-rel_CS"/>
</dbReference>
<dbReference type="InterPro" id="IPR013437">
    <property type="entry name" value="FtsW"/>
</dbReference>
<dbReference type="InterPro" id="IPR001182">
    <property type="entry name" value="FtsW/RodA"/>
</dbReference>
<dbReference type="NCBIfam" id="TIGR02614">
    <property type="entry name" value="ftsW"/>
    <property type="match status" value="1"/>
</dbReference>
<dbReference type="PANTHER" id="PTHR30474">
    <property type="entry name" value="CELL CYCLE PROTEIN"/>
    <property type="match status" value="1"/>
</dbReference>
<dbReference type="PANTHER" id="PTHR30474:SF2">
    <property type="entry name" value="PEPTIDOGLYCAN GLYCOSYLTRANSFERASE FTSW-RELATED"/>
    <property type="match status" value="1"/>
</dbReference>
<dbReference type="Pfam" id="PF01098">
    <property type="entry name" value="FTSW_RODA_SPOVE"/>
    <property type="match status" value="1"/>
</dbReference>
<dbReference type="PROSITE" id="PS00428">
    <property type="entry name" value="FTSW_RODA_SPOVE"/>
    <property type="match status" value="1"/>
</dbReference>
<organism>
    <name type="scientific">Francisella salina</name>
    <dbReference type="NCBI Taxonomy" id="573569"/>
    <lineage>
        <taxon>Bacteria</taxon>
        <taxon>Pseudomonadati</taxon>
        <taxon>Pseudomonadota</taxon>
        <taxon>Gammaproteobacteria</taxon>
        <taxon>Thiotrichales</taxon>
        <taxon>Francisellaceae</taxon>
        <taxon>Francisella</taxon>
    </lineage>
</organism>
<keyword id="KW-0131">Cell cycle</keyword>
<keyword id="KW-0132">Cell division</keyword>
<keyword id="KW-0997">Cell inner membrane</keyword>
<keyword id="KW-1003">Cell membrane</keyword>
<keyword id="KW-0133">Cell shape</keyword>
<keyword id="KW-0961">Cell wall biogenesis/degradation</keyword>
<keyword id="KW-0328">Glycosyltransferase</keyword>
<keyword id="KW-0472">Membrane</keyword>
<keyword id="KW-0573">Peptidoglycan synthesis</keyword>
<keyword id="KW-0808">Transferase</keyword>
<keyword id="KW-0812">Transmembrane</keyword>
<keyword id="KW-1133">Transmembrane helix</keyword>
<accession>F8GAB4</accession>
<gene>
    <name evidence="2" type="primary">ftsW</name>
    <name type="ordered locus">F7308_1793</name>
</gene>
<reference key="1">
    <citation type="submission" date="2011-05" db="EMBL/GenBank/DDBJ databases">
        <title>The complete genome of Francisella sp. TX077308.</title>
        <authorList>
            <person name="Kuske C.R."/>
            <person name="Challacombe J.F."/>
            <person name="Siddaramappa S."/>
            <person name="Petersen J.M."/>
        </authorList>
    </citation>
    <scope>NUCLEOTIDE SEQUENCE [LARGE SCALE GENOMIC DNA]</scope>
    <source>
        <strain>TX07-7308</strain>
    </source>
</reference>
<evidence type="ECO:0000255" key="1"/>
<evidence type="ECO:0000255" key="2">
    <source>
        <dbReference type="HAMAP-Rule" id="MF_00913"/>
    </source>
</evidence>
<comment type="function">
    <text evidence="2">Peptidoglycan polymerase that is essential for cell division.</text>
</comment>
<comment type="catalytic activity">
    <reaction evidence="2">
        <text>[GlcNAc-(1-&gt;4)-Mur2Ac(oyl-L-Ala-gamma-D-Glu-L-Lys-D-Ala-D-Ala)](n)-di-trans,octa-cis-undecaprenyl diphosphate + beta-D-GlcNAc-(1-&gt;4)-Mur2Ac(oyl-L-Ala-gamma-D-Glu-L-Lys-D-Ala-D-Ala)-di-trans,octa-cis-undecaprenyl diphosphate = [GlcNAc-(1-&gt;4)-Mur2Ac(oyl-L-Ala-gamma-D-Glu-L-Lys-D-Ala-D-Ala)](n+1)-di-trans,octa-cis-undecaprenyl diphosphate + di-trans,octa-cis-undecaprenyl diphosphate + H(+)</text>
        <dbReference type="Rhea" id="RHEA:23708"/>
        <dbReference type="Rhea" id="RHEA-COMP:9602"/>
        <dbReference type="Rhea" id="RHEA-COMP:9603"/>
        <dbReference type="ChEBI" id="CHEBI:15378"/>
        <dbReference type="ChEBI" id="CHEBI:58405"/>
        <dbReference type="ChEBI" id="CHEBI:60033"/>
        <dbReference type="ChEBI" id="CHEBI:78435"/>
        <dbReference type="EC" id="2.4.99.28"/>
    </reaction>
</comment>
<comment type="pathway">
    <text evidence="2">Cell wall biogenesis; peptidoglycan biosynthesis.</text>
</comment>
<comment type="subcellular location">
    <subcellularLocation>
        <location evidence="2">Cell inner membrane</location>
        <topology evidence="2">Multi-pass membrane protein</topology>
    </subcellularLocation>
    <text evidence="2">Localizes to the division septum.</text>
</comment>
<comment type="similarity">
    <text evidence="2">Belongs to the SEDS family. FtsW subfamily.</text>
</comment>
<feature type="chain" id="PRO_0000415181" description="Probable peptidoglycan glycosyltransferase FtsW">
    <location>
        <begin position="1"/>
        <end position="402"/>
    </location>
</feature>
<feature type="topological domain" description="Cytoplasmic" evidence="1">
    <location>
        <begin position="1"/>
        <end position="24"/>
    </location>
</feature>
<feature type="transmembrane region" description="Helical" evidence="2">
    <location>
        <begin position="25"/>
        <end position="45"/>
    </location>
</feature>
<feature type="topological domain" description="Periplasmic" evidence="1">
    <location>
        <begin position="46"/>
        <end position="63"/>
    </location>
</feature>
<feature type="transmembrane region" description="Helical" evidence="2">
    <location>
        <begin position="64"/>
        <end position="84"/>
    </location>
</feature>
<feature type="topological domain" description="Cytoplasmic" evidence="1">
    <location>
        <begin position="85"/>
        <end position="91"/>
    </location>
</feature>
<feature type="transmembrane region" description="Helical" evidence="2">
    <location>
        <begin position="92"/>
        <end position="112"/>
    </location>
</feature>
<feature type="topological domain" description="Periplasmic" evidence="1">
    <location>
        <begin position="113"/>
        <end position="121"/>
    </location>
</feature>
<feature type="transmembrane region" description="Helical" evidence="2">
    <location>
        <begin position="122"/>
        <end position="142"/>
    </location>
</feature>
<feature type="topological domain" description="Cytoplasmic" evidence="1">
    <location>
        <begin position="143"/>
        <end position="160"/>
    </location>
</feature>
<feature type="transmembrane region" description="Helical" evidence="2">
    <location>
        <begin position="161"/>
        <end position="181"/>
    </location>
</feature>
<feature type="transmembrane region" description="Helical" evidence="2">
    <location>
        <begin position="182"/>
        <end position="202"/>
    </location>
</feature>
<feature type="topological domain" description="Cytoplasmic" evidence="1">
    <location>
        <position position="203"/>
    </location>
</feature>
<feature type="transmembrane region" description="Helical" evidence="2">
    <location>
        <begin position="204"/>
        <end position="224"/>
    </location>
</feature>
<feature type="topological domain" description="Periplasmic" evidence="1">
    <location>
        <begin position="225"/>
        <end position="284"/>
    </location>
</feature>
<feature type="transmembrane region" description="Helical" evidence="2">
    <location>
        <begin position="285"/>
        <end position="305"/>
    </location>
</feature>
<feature type="topological domain" description="Cytoplasmic" evidence="1">
    <location>
        <begin position="306"/>
        <end position="324"/>
    </location>
</feature>
<feature type="transmembrane region" description="Helical" evidence="2">
    <location>
        <begin position="325"/>
        <end position="345"/>
    </location>
</feature>
<feature type="topological domain" description="Periplasmic" evidence="1">
    <location>
        <begin position="346"/>
        <end position="357"/>
    </location>
</feature>
<feature type="transmembrane region" description="Helical" evidence="2">
    <location>
        <begin position="358"/>
        <end position="378"/>
    </location>
</feature>
<feature type="topological domain" description="Cytoplasmic" evidence="1">
    <location>
        <begin position="379"/>
        <end position="402"/>
    </location>
</feature>
<sequence>MLYRLKLLLSGQNTKKERVRAKLEIDISIVFVMLGLLIFGWVMVTSASMVVALDDYNNPYFYSIRQGFFAVIAIFLFLLALLVPTKNYEKNYNAFFFIMLIVLVAVLVPGVGKSVNGARRWIPLIIINIQVAELAKLLAIIFFSGYIAENLPKMTNFKEGILTPITLLGCIAVLLLMQPDFGSTVVISICVMGMLFVSGNKVRWYGLLIGAMLIMATMLVIISPYRMHRITGFLHPWENANGSGYQLVQALIGFGRGGWFGDGLGNGVQKQFFLPEAHTDFITSVIAEEIGVIGLMILLMVYLFIVFRAMNIAKMAFELKRYYQAFLSYGISFWIGFQVFVNIGVNTGLLPTKGLTLPLISYGGSSLLIMCFTLGILVRVDFENKLLADTINPKYIYKKVRK</sequence>
<name>FTSW_FRAST</name>